<reference key="1">
    <citation type="journal article" date="2010" name="PLoS ONE">
        <title>The complete multipartite genome sequence of Cupriavidus necator JMP134, a versatile pollutant degrader.</title>
        <authorList>
            <person name="Lykidis A."/>
            <person name="Perez-Pantoja D."/>
            <person name="Ledger T."/>
            <person name="Mavromatis K."/>
            <person name="Anderson I.J."/>
            <person name="Ivanova N.N."/>
            <person name="Hooper S.D."/>
            <person name="Lapidus A."/>
            <person name="Lucas S."/>
            <person name="Gonzalez B."/>
            <person name="Kyrpides N.C."/>
        </authorList>
    </citation>
    <scope>NUCLEOTIDE SEQUENCE [LARGE SCALE GENOMIC DNA]</scope>
    <source>
        <strain>JMP134 / LMG 1197</strain>
    </source>
</reference>
<organism>
    <name type="scientific">Cupriavidus pinatubonensis (strain JMP 134 / LMG 1197)</name>
    <name type="common">Cupriavidus necator (strain JMP 134)</name>
    <dbReference type="NCBI Taxonomy" id="264198"/>
    <lineage>
        <taxon>Bacteria</taxon>
        <taxon>Pseudomonadati</taxon>
        <taxon>Pseudomonadota</taxon>
        <taxon>Betaproteobacteria</taxon>
        <taxon>Burkholderiales</taxon>
        <taxon>Burkholderiaceae</taxon>
        <taxon>Cupriavidus</taxon>
    </lineage>
</organism>
<sequence>MELHLTPRLKQRPAQAAACERYVDRLPVSSELRSELLADPSMPASAGISIDPRDAQAAIEQLQSRLSAREPAKGETPEPGGSTYGSVGRRFSLAYGNPQVAGEPLLKRRPDGTVHVDTGPEPQRSSMVPRQWPPHIVTGWVRNTWRRMLGRPPVPETWDTLHDGPDAEGKWHPAGSHRRWFLLGLVVAQTTLATYFMTKVLPYHGADLLEIAILVLFAVLFSWVSAGFWTAMMGFLVLAKGGDRHLISRSAAPDAPLAPDARTAVIMPICNEDVTRVFAGLRATYESLGRTGHLANFDFIVLSDSGNPDLRTAEVDAWMEVCRAVGGFGRIFYRWRRHRVKRKTGNVADFCRRWGSKYRYMVVLDADSVMSGDCLATLVRLMEANPGAGIIQTSPLAVGRETLYARVQQFATRVYGPLFTAGLHYWQLGESHYWGHNAIIRVKPFMEHCALAPLPGRGPLSGEILSHDFVEAALMRRAGWGVWIAYDLHGSYEELPPNLLDEVKRDRRWCQGNLMNFRLWLKQGFHMVHRAVFLTGIMAYLSAPLWFLFLLLSTAMLARHALVPPEYFTQPYQLFPTWPEWHPEKALALFSATATLLFLPKVASILLLVRQARQYGGLPRLVMSMLIEVVLSALLAPTRMLFHTKFVIAAYSGWGISWKSPPREDAETTWGEAVRRHGSHTLLGLAWGALVYWLNPSFVLWLLPIVGSLALSIPLSVMLSRVSFGRASREAGLFMIPEEALPPREIVETQQHVEQATETPNFVDAVVDPVTNALMCATASARVVQPASAKERHAALVQHALTGGPRALTASQRHILLGDPFALSKLHELVWGSPLADAGWKNIRLLVRRAPNVLPLRPRVA</sequence>
<name>OPGH_CUPPJ</name>
<comment type="function">
    <text evidence="1">Involved in the biosynthesis of osmoregulated periplasmic glucans (OPGs).</text>
</comment>
<comment type="pathway">
    <text evidence="1">Glycan metabolism; osmoregulated periplasmic glucan (OPG) biosynthesis.</text>
</comment>
<comment type="subcellular location">
    <subcellularLocation>
        <location evidence="1">Cell inner membrane</location>
        <topology evidence="1">Multi-pass membrane protein</topology>
    </subcellularLocation>
</comment>
<comment type="similarity">
    <text evidence="1">Belongs to the glycosyltransferase 2 family. OpgH subfamily.</text>
</comment>
<accession>Q46TZ4</accession>
<feature type="chain" id="PRO_1000064614" description="Glucans biosynthesis glucosyltransferase H">
    <location>
        <begin position="1"/>
        <end position="861"/>
    </location>
</feature>
<feature type="transmembrane region" description="Helical" evidence="1">
    <location>
        <begin position="181"/>
        <end position="201"/>
    </location>
</feature>
<feature type="transmembrane region" description="Helical" evidence="1">
    <location>
        <begin position="208"/>
        <end position="228"/>
    </location>
</feature>
<feature type="transmembrane region" description="Helical" evidence="1">
    <location>
        <begin position="532"/>
        <end position="552"/>
    </location>
</feature>
<feature type="transmembrane region" description="Helical" evidence="1">
    <location>
        <begin position="589"/>
        <end position="609"/>
    </location>
</feature>
<feature type="transmembrane region" description="Helical" evidence="1">
    <location>
        <begin position="616"/>
        <end position="636"/>
    </location>
</feature>
<feature type="transmembrane region" description="Helical" evidence="1">
    <location>
        <begin position="698"/>
        <end position="718"/>
    </location>
</feature>
<feature type="region of interest" description="Disordered" evidence="2">
    <location>
        <begin position="65"/>
        <end position="89"/>
    </location>
</feature>
<feature type="region of interest" description="Disordered" evidence="2">
    <location>
        <begin position="101"/>
        <end position="129"/>
    </location>
</feature>
<feature type="compositionally biased region" description="Basic and acidic residues" evidence="2">
    <location>
        <begin position="67"/>
        <end position="76"/>
    </location>
</feature>
<feature type="compositionally biased region" description="Basic and acidic residues" evidence="2">
    <location>
        <begin position="105"/>
        <end position="114"/>
    </location>
</feature>
<proteinExistence type="inferred from homology"/>
<evidence type="ECO:0000255" key="1">
    <source>
        <dbReference type="HAMAP-Rule" id="MF_01072"/>
    </source>
</evidence>
<evidence type="ECO:0000256" key="2">
    <source>
        <dbReference type="SAM" id="MobiDB-lite"/>
    </source>
</evidence>
<dbReference type="EC" id="2.4.1.-" evidence="1"/>
<dbReference type="EMBL" id="CP000091">
    <property type="protein sequence ID" value="AAZ63390.1"/>
    <property type="molecule type" value="Genomic_DNA"/>
</dbReference>
<dbReference type="STRING" id="264198.Reut_B4034"/>
<dbReference type="CAZy" id="GT2">
    <property type="family name" value="Glycosyltransferase Family 2"/>
</dbReference>
<dbReference type="KEGG" id="reu:Reut_B4034"/>
<dbReference type="eggNOG" id="COG2943">
    <property type="taxonomic scope" value="Bacteria"/>
</dbReference>
<dbReference type="HOGENOM" id="CLU_015730_0_0_4"/>
<dbReference type="OrthoDB" id="9775281at2"/>
<dbReference type="UniPathway" id="UPA00637"/>
<dbReference type="GO" id="GO:0005886">
    <property type="term" value="C:plasma membrane"/>
    <property type="evidence" value="ECO:0007669"/>
    <property type="project" value="UniProtKB-SubCell"/>
</dbReference>
<dbReference type="GO" id="GO:0016758">
    <property type="term" value="F:hexosyltransferase activity"/>
    <property type="evidence" value="ECO:0007669"/>
    <property type="project" value="UniProtKB-UniRule"/>
</dbReference>
<dbReference type="GO" id="GO:0009250">
    <property type="term" value="P:glucan biosynthetic process"/>
    <property type="evidence" value="ECO:0007669"/>
    <property type="project" value="UniProtKB-UniRule"/>
</dbReference>
<dbReference type="CDD" id="cd04191">
    <property type="entry name" value="Glucan_BSP_MdoH"/>
    <property type="match status" value="1"/>
</dbReference>
<dbReference type="FunFam" id="3.90.550.10:FF:000047">
    <property type="entry name" value="Glucans biosynthesis glucosyltransferase H"/>
    <property type="match status" value="1"/>
</dbReference>
<dbReference type="Gene3D" id="3.90.550.10">
    <property type="entry name" value="Spore Coat Polysaccharide Biosynthesis Protein SpsA, Chain A"/>
    <property type="match status" value="1"/>
</dbReference>
<dbReference type="HAMAP" id="MF_01072">
    <property type="entry name" value="MdoH_OpgH"/>
    <property type="match status" value="1"/>
</dbReference>
<dbReference type="InterPro" id="IPR023725">
    <property type="entry name" value="Glucans_biosynth_gluTrFase_H"/>
</dbReference>
<dbReference type="InterPro" id="IPR001173">
    <property type="entry name" value="Glyco_trans_2-like"/>
</dbReference>
<dbReference type="InterPro" id="IPR050321">
    <property type="entry name" value="Glycosyltr_2/OpgH_subfam"/>
</dbReference>
<dbReference type="InterPro" id="IPR029044">
    <property type="entry name" value="Nucleotide-diphossugar_trans"/>
</dbReference>
<dbReference type="NCBIfam" id="NF003955">
    <property type="entry name" value="PRK05454.1-1"/>
    <property type="match status" value="1"/>
</dbReference>
<dbReference type="NCBIfam" id="NF003958">
    <property type="entry name" value="PRK05454.2-1"/>
    <property type="match status" value="1"/>
</dbReference>
<dbReference type="NCBIfam" id="NF003962">
    <property type="entry name" value="PRK05454.2-5"/>
    <property type="match status" value="1"/>
</dbReference>
<dbReference type="PANTHER" id="PTHR43867">
    <property type="entry name" value="CELLULOSE SYNTHASE CATALYTIC SUBUNIT A [UDP-FORMING]"/>
    <property type="match status" value="1"/>
</dbReference>
<dbReference type="PANTHER" id="PTHR43867:SF5">
    <property type="entry name" value="GLUCANS BIOSYNTHESIS GLUCOSYLTRANSFERASE H"/>
    <property type="match status" value="1"/>
</dbReference>
<dbReference type="Pfam" id="PF13632">
    <property type="entry name" value="Glyco_trans_2_3"/>
    <property type="match status" value="1"/>
</dbReference>
<dbReference type="SUPFAM" id="SSF53448">
    <property type="entry name" value="Nucleotide-diphospho-sugar transferases"/>
    <property type="match status" value="1"/>
</dbReference>
<gene>
    <name evidence="1" type="primary">opgH</name>
    <name type="ordered locus">Reut_B4034</name>
</gene>
<keyword id="KW-0997">Cell inner membrane</keyword>
<keyword id="KW-1003">Cell membrane</keyword>
<keyword id="KW-0328">Glycosyltransferase</keyword>
<keyword id="KW-0472">Membrane</keyword>
<keyword id="KW-0808">Transferase</keyword>
<keyword id="KW-0812">Transmembrane</keyword>
<keyword id="KW-1133">Transmembrane helix</keyword>
<protein>
    <recommendedName>
        <fullName evidence="1">Glucans biosynthesis glucosyltransferase H</fullName>
        <ecNumber evidence="1">2.4.1.-</ecNumber>
    </recommendedName>
</protein>